<gene>
    <name type="ordered locus">BQ2027_MB0965C</name>
</gene>
<proteinExistence type="predicted"/>
<keyword id="KW-1185">Reference proteome</keyword>
<sequence>MRFSYAEAMTDFTFYIPLAKAAEAAGYSSMTIPDSIAYPFESDSKYPYTPDGNREFMDGKPFIETFVLTAALGAVTTRLRFNFFVLKLPIRPPALVAKQAGSLAALIGNRVGLGVGTSPWPEDYELMGVPFAKRGKRIDECIEIVRGLTTGDYFEFHGEFYDIPKTKMTPAPTQPIPILVGGHADAALRRAARADGWMHGGGDPDELDRLIARVKRLREEAGKTSPFEIHVISLDGFTVDGVKRLEDKGVTDVIVGFRVPYTMGPDTEPLQTKIRNLEMFAENVIAKV</sequence>
<reference key="1">
    <citation type="journal article" date="2003" name="Proc. Natl. Acad. Sci. U.S.A.">
        <title>The complete genome sequence of Mycobacterium bovis.</title>
        <authorList>
            <person name="Garnier T."/>
            <person name="Eiglmeier K."/>
            <person name="Camus J.-C."/>
            <person name="Medina N."/>
            <person name="Mansoor H."/>
            <person name="Pryor M."/>
            <person name="Duthoy S."/>
            <person name="Grondin S."/>
            <person name="Lacroix C."/>
            <person name="Monsempe C."/>
            <person name="Simon S."/>
            <person name="Harris B."/>
            <person name="Atkin R."/>
            <person name="Doggett J."/>
            <person name="Mayes R."/>
            <person name="Keating L."/>
            <person name="Wheeler P.R."/>
            <person name="Parkhill J."/>
            <person name="Barrell B.G."/>
            <person name="Cole S.T."/>
            <person name="Gordon S.V."/>
            <person name="Hewinson R.G."/>
        </authorList>
    </citation>
    <scope>NUCLEOTIDE SEQUENCE [LARGE SCALE GENOMIC DNA]</scope>
    <source>
        <strain>ATCC BAA-935 / AF2122/97</strain>
    </source>
</reference>
<reference key="2">
    <citation type="journal article" date="2017" name="Genome Announc.">
        <title>Updated reference genome sequence and annotation of Mycobacterium bovis AF2122/97.</title>
        <authorList>
            <person name="Malone K.M."/>
            <person name="Farrell D."/>
            <person name="Stuber T.P."/>
            <person name="Schubert O.T."/>
            <person name="Aebersold R."/>
            <person name="Robbe-Austerman S."/>
            <person name="Gordon S.V."/>
        </authorList>
    </citation>
    <scope>NUCLEOTIDE SEQUENCE [LARGE SCALE GENOMIC DNA]</scope>
    <scope>GENOME REANNOTATION</scope>
    <source>
        <strain>ATCC BAA-935 / AF2122/97</strain>
    </source>
</reference>
<dbReference type="EMBL" id="LT708304">
    <property type="protein sequence ID" value="SIT99563.1"/>
    <property type="molecule type" value="Genomic_DNA"/>
</dbReference>
<dbReference type="RefSeq" id="NP_854622.1">
    <property type="nucleotide sequence ID" value="NC_002945.3"/>
</dbReference>
<dbReference type="RefSeq" id="WP_003404819.1">
    <property type="nucleotide sequence ID" value="NC_002945.4"/>
</dbReference>
<dbReference type="SMR" id="P64762"/>
<dbReference type="KEGG" id="mbo:BQ2027_MB0965C"/>
<dbReference type="PATRIC" id="fig|233413.5.peg.1050"/>
<dbReference type="Proteomes" id="UP000001419">
    <property type="component" value="Chromosome"/>
</dbReference>
<dbReference type="GO" id="GO:0016705">
    <property type="term" value="F:oxidoreductase activity, acting on paired donors, with incorporation or reduction of molecular oxygen"/>
    <property type="evidence" value="ECO:0007669"/>
    <property type="project" value="InterPro"/>
</dbReference>
<dbReference type="FunFam" id="3.20.20.30:FF:000014">
    <property type="entry name" value="LLM class F420-dependent oxidoreductase"/>
    <property type="match status" value="1"/>
</dbReference>
<dbReference type="Gene3D" id="3.20.20.30">
    <property type="entry name" value="Luciferase-like domain"/>
    <property type="match status" value="1"/>
</dbReference>
<dbReference type="InterPro" id="IPR051260">
    <property type="entry name" value="Diverse_substr_monoxygenases"/>
</dbReference>
<dbReference type="InterPro" id="IPR019921">
    <property type="entry name" value="Lucif-like_OxRdtase_Rv2161c"/>
</dbReference>
<dbReference type="InterPro" id="IPR011251">
    <property type="entry name" value="Luciferase-like_dom"/>
</dbReference>
<dbReference type="InterPro" id="IPR036661">
    <property type="entry name" value="Luciferase-like_sf"/>
</dbReference>
<dbReference type="NCBIfam" id="TIGR03619">
    <property type="entry name" value="F420_Rv2161c"/>
    <property type="match status" value="1"/>
</dbReference>
<dbReference type="PANTHER" id="PTHR30011">
    <property type="entry name" value="ALKANESULFONATE MONOOXYGENASE-RELATED"/>
    <property type="match status" value="1"/>
</dbReference>
<dbReference type="PANTHER" id="PTHR30011:SF32">
    <property type="entry name" value="CONSERVED PROTEIN"/>
    <property type="match status" value="1"/>
</dbReference>
<dbReference type="Pfam" id="PF00296">
    <property type="entry name" value="Bac_luciferase"/>
    <property type="match status" value="1"/>
</dbReference>
<dbReference type="SUPFAM" id="SSF51679">
    <property type="entry name" value="Bacterial luciferase-like"/>
    <property type="match status" value="1"/>
</dbReference>
<accession>P64762</accession>
<accession>A0A1R3XXV1</accession>
<accession>P71569</accession>
<accession>X2BGL1</accession>
<organism>
    <name type="scientific">Mycobacterium bovis (strain ATCC BAA-935 / AF2122/97)</name>
    <dbReference type="NCBI Taxonomy" id="233413"/>
    <lineage>
        <taxon>Bacteria</taxon>
        <taxon>Bacillati</taxon>
        <taxon>Actinomycetota</taxon>
        <taxon>Actinomycetes</taxon>
        <taxon>Mycobacteriales</taxon>
        <taxon>Mycobacteriaceae</taxon>
        <taxon>Mycobacterium</taxon>
        <taxon>Mycobacterium tuberculosis complex</taxon>
    </lineage>
</organism>
<feature type="chain" id="PRO_0000103744" description="Uncharacterized protein Mb0965c">
    <location>
        <begin position="1"/>
        <end position="288"/>
    </location>
</feature>
<name>Y965_MYCBO</name>
<protein>
    <recommendedName>
        <fullName>Uncharacterized protein Mb0965c</fullName>
    </recommendedName>
</protein>